<keyword id="KW-0025">Alternative splicing</keyword>
<keyword id="KW-0965">Cell junction</keyword>
<keyword id="KW-0175">Coiled coil</keyword>
<keyword id="KW-0963">Cytoplasm</keyword>
<keyword id="KW-0206">Cytoskeleton</keyword>
<keyword id="KW-0597">Phosphoprotein</keyword>
<keyword id="KW-1185">Reference proteome</keyword>
<keyword id="KW-0677">Repeat</keyword>
<dbReference type="EMBL" id="EU380771">
    <property type="protein sequence ID" value="ACB38003.1"/>
    <property type="molecule type" value="mRNA"/>
</dbReference>
<dbReference type="EMBL" id="EU380772">
    <property type="protein sequence ID" value="ACB38004.1"/>
    <property type="molecule type" value="mRNA"/>
</dbReference>
<dbReference type="EMBL" id="AK040271">
    <property type="protein sequence ID" value="BAC30557.1"/>
    <property type="molecule type" value="mRNA"/>
</dbReference>
<dbReference type="EMBL" id="AK146866">
    <property type="protein sequence ID" value="BAE27490.1"/>
    <property type="molecule type" value="mRNA"/>
</dbReference>
<dbReference type="EMBL" id="AK160810">
    <property type="protein sequence ID" value="BAE36027.1"/>
    <property type="status" value="ALT_FRAME"/>
    <property type="molecule type" value="mRNA"/>
</dbReference>
<dbReference type="EMBL" id="BC084587">
    <property type="protein sequence ID" value="AAH84587.1"/>
    <property type="molecule type" value="mRNA"/>
</dbReference>
<dbReference type="CCDS" id="CCDS40099.1">
    <molecule id="Q3UIL6-4"/>
</dbReference>
<dbReference type="CCDS" id="CCDS80791.1">
    <molecule id="Q3UIL6-3"/>
</dbReference>
<dbReference type="CCDS" id="CCDS85395.1">
    <molecule id="Q3UIL6-5"/>
</dbReference>
<dbReference type="CCDS" id="CCDS85396.1">
    <molecule id="Q3UIL6-6"/>
</dbReference>
<dbReference type="CCDS" id="CCDS85397.1">
    <molecule id="Q3UIL6-2"/>
</dbReference>
<dbReference type="RefSeq" id="NP_001292114.1">
    <molecule id="Q3UIL6-2"/>
    <property type="nucleotide sequence ID" value="NM_001305185.2"/>
</dbReference>
<dbReference type="RefSeq" id="NP_001292115.1">
    <molecule id="Q3UIL6-6"/>
    <property type="nucleotide sequence ID" value="NM_001305186.2"/>
</dbReference>
<dbReference type="RefSeq" id="NP_001292118.1">
    <molecule id="Q3UIL6-3"/>
    <property type="nucleotide sequence ID" value="NM_001305189.2"/>
</dbReference>
<dbReference type="RefSeq" id="NP_001292119.1">
    <molecule id="Q3UIL6-5"/>
    <property type="nucleotide sequence ID" value="NM_001305190.2"/>
</dbReference>
<dbReference type="RefSeq" id="NP_001392001.1">
    <molecule id="Q3UIL6-1"/>
    <property type="nucleotide sequence ID" value="NM_001405072.1"/>
</dbReference>
<dbReference type="RefSeq" id="NP_766331.1">
    <molecule id="Q3UIL6-4"/>
    <property type="nucleotide sequence ID" value="NM_172743.4"/>
</dbReference>
<dbReference type="SMR" id="Q3UIL6"/>
<dbReference type="BioGRID" id="231441">
    <property type="interactions" value="3"/>
</dbReference>
<dbReference type="FunCoup" id="Q3UIL6">
    <property type="interactions" value="465"/>
</dbReference>
<dbReference type="IntAct" id="Q3UIL6">
    <property type="interactions" value="1"/>
</dbReference>
<dbReference type="STRING" id="10090.ENSMUSP00000138575"/>
<dbReference type="GlyGen" id="Q3UIL6">
    <property type="glycosylation" value="1 site, 1 O-linked glycan (1 site)"/>
</dbReference>
<dbReference type="iPTMnet" id="Q3UIL6"/>
<dbReference type="PhosphoSitePlus" id="Q3UIL6"/>
<dbReference type="jPOST" id="Q3UIL6"/>
<dbReference type="PaxDb" id="10090-ENSMUSP00000081714"/>
<dbReference type="PeptideAtlas" id="Q3UIL6"/>
<dbReference type="ProteomicsDB" id="289902">
    <molecule id="Q3UIL6-1"/>
</dbReference>
<dbReference type="ProteomicsDB" id="289903">
    <molecule id="Q3UIL6-2"/>
</dbReference>
<dbReference type="ProteomicsDB" id="289904">
    <molecule id="Q3UIL6-3"/>
</dbReference>
<dbReference type="ProteomicsDB" id="289905">
    <molecule id="Q3UIL6-4"/>
</dbReference>
<dbReference type="ProteomicsDB" id="289906">
    <molecule id="Q3UIL6-5"/>
</dbReference>
<dbReference type="ProteomicsDB" id="289907">
    <molecule id="Q3UIL6-6"/>
</dbReference>
<dbReference type="Antibodypedia" id="42457">
    <property type="antibodies" value="117 antibodies from 19 providers"/>
</dbReference>
<dbReference type="DNASU" id="233765"/>
<dbReference type="Ensembl" id="ENSMUST00000084664.11">
    <molecule id="Q3UIL6-4"/>
    <property type="protein sequence ID" value="ENSMUSP00000081714.5"/>
    <property type="gene ID" value="ENSMUSG00000045659.19"/>
</dbReference>
<dbReference type="Ensembl" id="ENSMUST00000181981.8">
    <molecule id="Q3UIL6-3"/>
    <property type="protein sequence ID" value="ENSMUSP00000138766.2"/>
    <property type="gene ID" value="ENSMUSG00000045659.19"/>
</dbReference>
<dbReference type="Ensembl" id="ENSMUST00000181998.8">
    <molecule id="Q3UIL6-2"/>
    <property type="protein sequence ID" value="ENSMUSP00000138575.2"/>
    <property type="gene ID" value="ENSMUSG00000045659.19"/>
</dbReference>
<dbReference type="Ensembl" id="ENSMUST00000182487.8">
    <molecule id="Q3UIL6-1"/>
    <property type="protein sequence ID" value="ENSMUSP00000138214.2"/>
    <property type="gene ID" value="ENSMUSG00000045659.19"/>
</dbReference>
<dbReference type="Ensembl" id="ENSMUST00000182511.8">
    <molecule id="Q3UIL6-5"/>
    <property type="protein sequence ID" value="ENSMUSP00000138544.2"/>
    <property type="gene ID" value="ENSMUSG00000045659.19"/>
</dbReference>
<dbReference type="Ensembl" id="ENSMUST00000182834.8">
    <molecule id="Q3UIL6-6"/>
    <property type="protein sequence ID" value="ENSMUSP00000138257.2"/>
    <property type="gene ID" value="ENSMUSG00000045659.19"/>
</dbReference>
<dbReference type="GeneID" id="233765"/>
<dbReference type="KEGG" id="mmu:233765"/>
<dbReference type="UCSC" id="uc009jiy.2">
    <molecule id="Q3UIL6-4"/>
    <property type="organism name" value="mouse"/>
</dbReference>
<dbReference type="UCSC" id="uc009jiz.3">
    <molecule id="Q3UIL6-2"/>
    <property type="organism name" value="mouse"/>
</dbReference>
<dbReference type="UCSC" id="uc009jja.1">
    <molecule id="Q3UIL6-6"/>
    <property type="organism name" value="mouse"/>
</dbReference>
<dbReference type="UCSC" id="uc009jjc.2">
    <molecule id="Q3UIL6-1"/>
    <property type="organism name" value="mouse"/>
</dbReference>
<dbReference type="AGR" id="MGI:2445094"/>
<dbReference type="CTD" id="144100"/>
<dbReference type="MGI" id="MGI:2445094">
    <property type="gene designation" value="Plekha7"/>
</dbReference>
<dbReference type="VEuPathDB" id="HostDB:ENSMUSG00000045659"/>
<dbReference type="eggNOG" id="KOG0940">
    <property type="taxonomic scope" value="Eukaryota"/>
</dbReference>
<dbReference type="GeneTree" id="ENSGT00940000155817"/>
<dbReference type="HOGENOM" id="CLU_008216_0_0_1"/>
<dbReference type="InParanoid" id="Q3UIL6"/>
<dbReference type="OMA" id="FINDKSH"/>
<dbReference type="PhylomeDB" id="Q3UIL6"/>
<dbReference type="TreeFam" id="TF329090"/>
<dbReference type="BioGRID-ORCS" id="233765">
    <property type="hits" value="0 hits in 28 CRISPR screens"/>
</dbReference>
<dbReference type="CD-CODE" id="CE726F99">
    <property type="entry name" value="Postsynaptic density"/>
</dbReference>
<dbReference type="ChiTaRS" id="Plekha7">
    <property type="organism name" value="mouse"/>
</dbReference>
<dbReference type="PRO" id="PR:Q3UIL6"/>
<dbReference type="Proteomes" id="UP000000589">
    <property type="component" value="Chromosome 7"/>
</dbReference>
<dbReference type="RNAct" id="Q3UIL6">
    <property type="molecule type" value="protein"/>
</dbReference>
<dbReference type="Bgee" id="ENSMUSG00000045659">
    <property type="expression patterns" value="Expressed in placenta labyrinth and 223 other cell types or tissues"/>
</dbReference>
<dbReference type="ExpressionAtlas" id="Q3UIL6">
    <property type="expression patterns" value="baseline and differential"/>
</dbReference>
<dbReference type="GO" id="GO:0005911">
    <property type="term" value="C:cell-cell junction"/>
    <property type="evidence" value="ECO:0000314"/>
    <property type="project" value="ARUK-UCL"/>
</dbReference>
<dbReference type="GO" id="GO:0005813">
    <property type="term" value="C:centrosome"/>
    <property type="evidence" value="ECO:0000250"/>
    <property type="project" value="UniProtKB"/>
</dbReference>
<dbReference type="GO" id="GO:0005829">
    <property type="term" value="C:cytosol"/>
    <property type="evidence" value="ECO:0007669"/>
    <property type="project" value="Ensembl"/>
</dbReference>
<dbReference type="GO" id="GO:0005654">
    <property type="term" value="C:nucleoplasm"/>
    <property type="evidence" value="ECO:0007669"/>
    <property type="project" value="Ensembl"/>
</dbReference>
<dbReference type="GO" id="GO:0046930">
    <property type="term" value="C:pore complex"/>
    <property type="evidence" value="ECO:0000315"/>
    <property type="project" value="UniProtKB"/>
</dbReference>
<dbReference type="GO" id="GO:0005915">
    <property type="term" value="C:zonula adherens"/>
    <property type="evidence" value="ECO:0000250"/>
    <property type="project" value="UniProtKB"/>
</dbReference>
<dbReference type="GO" id="GO:0070097">
    <property type="term" value="F:delta-catenin binding"/>
    <property type="evidence" value="ECO:0000250"/>
    <property type="project" value="UniProtKB"/>
</dbReference>
<dbReference type="GO" id="GO:0044331">
    <property type="term" value="P:cell-cell adhesion mediated by cadherin"/>
    <property type="evidence" value="ECO:0000315"/>
    <property type="project" value="ARUK-UCL"/>
</dbReference>
<dbReference type="GO" id="GO:0090136">
    <property type="term" value="P:epithelial cell-cell adhesion"/>
    <property type="evidence" value="ECO:0000250"/>
    <property type="project" value="UniProtKB"/>
</dbReference>
<dbReference type="GO" id="GO:0046931">
    <property type="term" value="P:pore complex assembly"/>
    <property type="evidence" value="ECO:0000315"/>
    <property type="project" value="UniProtKB"/>
</dbReference>
<dbReference type="GO" id="GO:0042311">
    <property type="term" value="P:vasodilation"/>
    <property type="evidence" value="ECO:0007669"/>
    <property type="project" value="Ensembl"/>
</dbReference>
<dbReference type="GO" id="GO:0045218">
    <property type="term" value="P:zonula adherens maintenance"/>
    <property type="evidence" value="ECO:0000250"/>
    <property type="project" value="UniProtKB"/>
</dbReference>
<dbReference type="CDD" id="cd13248">
    <property type="entry name" value="PH_PEPP1_2_3"/>
    <property type="match status" value="1"/>
</dbReference>
<dbReference type="CDD" id="cd00201">
    <property type="entry name" value="WW"/>
    <property type="match status" value="1"/>
</dbReference>
<dbReference type="FunFam" id="2.30.29.30:FF:000103">
    <property type="entry name" value="Pleckstrin homology domain-containing family A member 4"/>
    <property type="match status" value="1"/>
</dbReference>
<dbReference type="FunFam" id="2.20.70.10:FF:000027">
    <property type="entry name" value="pleckstrin homology domain-containing family A member 5 isoform X1"/>
    <property type="match status" value="1"/>
</dbReference>
<dbReference type="Gene3D" id="2.20.70.10">
    <property type="match status" value="2"/>
</dbReference>
<dbReference type="Gene3D" id="2.30.29.30">
    <property type="entry name" value="Pleckstrin-homology domain (PH domain)/Phosphotyrosine-binding domain (PTB)"/>
    <property type="match status" value="1"/>
</dbReference>
<dbReference type="InterPro" id="IPR011993">
    <property type="entry name" value="PH-like_dom_sf"/>
</dbReference>
<dbReference type="InterPro" id="IPR001849">
    <property type="entry name" value="PH_domain"/>
</dbReference>
<dbReference type="InterPro" id="IPR040392">
    <property type="entry name" value="PKHA4-7_PH"/>
</dbReference>
<dbReference type="InterPro" id="IPR001202">
    <property type="entry name" value="WW_dom"/>
</dbReference>
<dbReference type="InterPro" id="IPR036020">
    <property type="entry name" value="WW_dom_sf"/>
</dbReference>
<dbReference type="PANTHER" id="PTHR12752">
    <property type="entry name" value="PHOSPHOINOSITOL 3-PHOSPHATE-BINDING PROTEIN"/>
    <property type="match status" value="1"/>
</dbReference>
<dbReference type="PANTHER" id="PTHR12752:SF4">
    <property type="entry name" value="PLECKSTRIN HOMOLOGY DOMAIN-CONTAINING FAMILY A MEMBER 7"/>
    <property type="match status" value="1"/>
</dbReference>
<dbReference type="Pfam" id="PF00169">
    <property type="entry name" value="PH"/>
    <property type="match status" value="1"/>
</dbReference>
<dbReference type="SMART" id="SM00233">
    <property type="entry name" value="PH"/>
    <property type="match status" value="1"/>
</dbReference>
<dbReference type="SMART" id="SM00456">
    <property type="entry name" value="WW"/>
    <property type="match status" value="2"/>
</dbReference>
<dbReference type="SUPFAM" id="SSF50729">
    <property type="entry name" value="PH domain-like"/>
    <property type="match status" value="1"/>
</dbReference>
<dbReference type="SUPFAM" id="SSF51045">
    <property type="entry name" value="WW domain"/>
    <property type="match status" value="2"/>
</dbReference>
<dbReference type="PROSITE" id="PS50003">
    <property type="entry name" value="PH_DOMAIN"/>
    <property type="match status" value="1"/>
</dbReference>
<dbReference type="PROSITE" id="PS01159">
    <property type="entry name" value="WW_DOMAIN_1"/>
    <property type="match status" value="1"/>
</dbReference>
<dbReference type="PROSITE" id="PS50020">
    <property type="entry name" value="WW_DOMAIN_2"/>
    <property type="match status" value="2"/>
</dbReference>
<name>PKHA7_MOUSE</name>
<sequence length="1118" mass="126742">MAAAVGRDTLPEHWSYGVCRDGRVFFINDQLRCTTWLHPRTGEPVNSGHMIRSDLPRGWEEGFTEEGASFFIDHNQQTTTFRHPVTGQFSSENSEYVLREEPHPHMSKPERNQRPSSMVSETSTAGTTSTLEAKPGPKIVKSSSKVHSFGKRDQAIRRNLNVPVVVRGWLHKQDSSGMRLWKRRWFVLADYCLFYYKDSREEAVLGSIPLPSYVISPVAPEDRISRKYSFKAVHTGMRALIYSTTTAGSQMEHSGMRTYYFSADTLEDMNAWVRAMNQAAQVLSRSSLRRDVDKVERQAMPQANHTDACQECGHVGPGHSRDCPRRGYEDSYGFNRREQEEERFRAQRDPLEGRRDRSKARSPYLPAEEDALFVDLPGGPRGQQAQPQRAEKNGVPPYGLGEQNGTNGYQRTAPPRANPEKHSQRKTGLAQAEHWTKAQKGDGRSLPLDQTLPRQGPSQPLSFPENYQSLPKSTRHLSGSSSPPPRNLPSDYKYAQDRASHLKMSSEERRAHRDGTVWQLYEWQQRQQFRHGSPTAPIGAGSPEFTEQGRSRSLLEVPRSISVPPSPSDIPPPGPPRPFPPRRPHTPAERVTVKPPEQRRSVDISLGGSPRKARGHAAKNSSHVDRRSMPSMGYMTHTVSAPSLHGKSADDTYLQLKKDLEYLDLKMTGRDLLKDRSLKPMKIAESDIDVKLSIFCEQDRILQDLEDKIRALKENKDQLESVLEVLHRQTEQYRDQPQHLEKITCQQRLLQEDLVHIRAELCRESTEMENAWNEYLKLEKDVEQLKQTLQEQHRRAFFFQEKSQIQKDLWRIEDVMAGLSANKENYRVLVGSVKNPERKTVPLFPHPSVPSLSPTESKPALQPSPPTSPVRTPLEVRLFPQLQTYVPYRPHPPQLRKVMSPLQSPTKAKPQAEDEAPPRPPLPELYSPEDQPPAVPPLPREATIIRHTSVRGLKRQSDERKRDREQGQCVNGDLKVELRSYVSEPELASLSGDVPQPSLSLVGSESRYQTLPGRGLSGSTSRLQQSSTIAPYVTLRRGLNAENSSATFSRPKSALERLYSGDHQRGKMSAEEQLERMKRHQKALVRERKRTLSQGEKTGLLSARYLSQPLPGDLGSVC</sequence>
<evidence type="ECO:0000250" key="1"/>
<evidence type="ECO:0000250" key="2">
    <source>
        <dbReference type="UniProtKB" id="Q6IQ23"/>
    </source>
</evidence>
<evidence type="ECO:0000255" key="3"/>
<evidence type="ECO:0000255" key="4">
    <source>
        <dbReference type="PROSITE-ProRule" id="PRU00145"/>
    </source>
</evidence>
<evidence type="ECO:0000255" key="5">
    <source>
        <dbReference type="PROSITE-ProRule" id="PRU00224"/>
    </source>
</evidence>
<evidence type="ECO:0000256" key="6">
    <source>
        <dbReference type="SAM" id="MobiDB-lite"/>
    </source>
</evidence>
<evidence type="ECO:0000269" key="7">
    <source>
    </source>
</evidence>
<evidence type="ECO:0000303" key="8">
    <source>
    </source>
</evidence>
<evidence type="ECO:0000303" key="9">
    <source>
    </source>
</evidence>
<evidence type="ECO:0000303" key="10">
    <source ref="1"/>
</evidence>
<evidence type="ECO:0000305" key="11"/>
<evidence type="ECO:0007744" key="12">
    <source>
    </source>
</evidence>
<evidence type="ECO:0007744" key="13">
    <source>
    </source>
</evidence>
<evidence type="ECO:0007744" key="14">
    <source>
    </source>
</evidence>
<reference key="1">
    <citation type="submission" date="2008-01" db="EMBL/GenBank/DDBJ databases">
        <title>HADP1, a novel pleckstrin homology domain protein, is required for cardiac contractility in zebrafish.</title>
        <authorList>
            <person name="Wythe J.D."/>
            <person name="Urness L.D."/>
            <person name="Jones C.A."/>
            <person name="Jurynec M."/>
            <person name="Grunwald D.J."/>
            <person name="MacRae C.A."/>
            <person name="Li D.Y."/>
        </authorList>
    </citation>
    <scope>NUCLEOTIDE SEQUENCE [MRNA] (ISOFORMS 2 AND 6)</scope>
    <source>
        <strain>C57BL/6J</strain>
    </source>
</reference>
<reference key="2">
    <citation type="journal article" date="2005" name="Science">
        <title>The transcriptional landscape of the mammalian genome.</title>
        <authorList>
            <person name="Carninci P."/>
            <person name="Kasukawa T."/>
            <person name="Katayama S."/>
            <person name="Gough J."/>
            <person name="Frith M.C."/>
            <person name="Maeda N."/>
            <person name="Oyama R."/>
            <person name="Ravasi T."/>
            <person name="Lenhard B."/>
            <person name="Wells C."/>
            <person name="Kodzius R."/>
            <person name="Shimokawa K."/>
            <person name="Bajic V.B."/>
            <person name="Brenner S.E."/>
            <person name="Batalov S."/>
            <person name="Forrest A.R."/>
            <person name="Zavolan M."/>
            <person name="Davis M.J."/>
            <person name="Wilming L.G."/>
            <person name="Aidinis V."/>
            <person name="Allen J.E."/>
            <person name="Ambesi-Impiombato A."/>
            <person name="Apweiler R."/>
            <person name="Aturaliya R.N."/>
            <person name="Bailey T.L."/>
            <person name="Bansal M."/>
            <person name="Baxter L."/>
            <person name="Beisel K.W."/>
            <person name="Bersano T."/>
            <person name="Bono H."/>
            <person name="Chalk A.M."/>
            <person name="Chiu K.P."/>
            <person name="Choudhary V."/>
            <person name="Christoffels A."/>
            <person name="Clutterbuck D.R."/>
            <person name="Crowe M.L."/>
            <person name="Dalla E."/>
            <person name="Dalrymple B.P."/>
            <person name="de Bono B."/>
            <person name="Della Gatta G."/>
            <person name="di Bernardo D."/>
            <person name="Down T."/>
            <person name="Engstrom P."/>
            <person name="Fagiolini M."/>
            <person name="Faulkner G."/>
            <person name="Fletcher C.F."/>
            <person name="Fukushima T."/>
            <person name="Furuno M."/>
            <person name="Futaki S."/>
            <person name="Gariboldi M."/>
            <person name="Georgii-Hemming P."/>
            <person name="Gingeras T.R."/>
            <person name="Gojobori T."/>
            <person name="Green R.E."/>
            <person name="Gustincich S."/>
            <person name="Harbers M."/>
            <person name="Hayashi Y."/>
            <person name="Hensch T.K."/>
            <person name="Hirokawa N."/>
            <person name="Hill D."/>
            <person name="Huminiecki L."/>
            <person name="Iacono M."/>
            <person name="Ikeo K."/>
            <person name="Iwama A."/>
            <person name="Ishikawa T."/>
            <person name="Jakt M."/>
            <person name="Kanapin A."/>
            <person name="Katoh M."/>
            <person name="Kawasawa Y."/>
            <person name="Kelso J."/>
            <person name="Kitamura H."/>
            <person name="Kitano H."/>
            <person name="Kollias G."/>
            <person name="Krishnan S.P."/>
            <person name="Kruger A."/>
            <person name="Kummerfeld S.K."/>
            <person name="Kurochkin I.V."/>
            <person name="Lareau L.F."/>
            <person name="Lazarevic D."/>
            <person name="Lipovich L."/>
            <person name="Liu J."/>
            <person name="Liuni S."/>
            <person name="McWilliam S."/>
            <person name="Madan Babu M."/>
            <person name="Madera M."/>
            <person name="Marchionni L."/>
            <person name="Matsuda H."/>
            <person name="Matsuzawa S."/>
            <person name="Miki H."/>
            <person name="Mignone F."/>
            <person name="Miyake S."/>
            <person name="Morris K."/>
            <person name="Mottagui-Tabar S."/>
            <person name="Mulder N."/>
            <person name="Nakano N."/>
            <person name="Nakauchi H."/>
            <person name="Ng P."/>
            <person name="Nilsson R."/>
            <person name="Nishiguchi S."/>
            <person name="Nishikawa S."/>
            <person name="Nori F."/>
            <person name="Ohara O."/>
            <person name="Okazaki Y."/>
            <person name="Orlando V."/>
            <person name="Pang K.C."/>
            <person name="Pavan W.J."/>
            <person name="Pavesi G."/>
            <person name="Pesole G."/>
            <person name="Petrovsky N."/>
            <person name="Piazza S."/>
            <person name="Reed J."/>
            <person name="Reid J.F."/>
            <person name="Ring B.Z."/>
            <person name="Ringwald M."/>
            <person name="Rost B."/>
            <person name="Ruan Y."/>
            <person name="Salzberg S.L."/>
            <person name="Sandelin A."/>
            <person name="Schneider C."/>
            <person name="Schoenbach C."/>
            <person name="Sekiguchi K."/>
            <person name="Semple C.A."/>
            <person name="Seno S."/>
            <person name="Sessa L."/>
            <person name="Sheng Y."/>
            <person name="Shibata Y."/>
            <person name="Shimada H."/>
            <person name="Shimada K."/>
            <person name="Silva D."/>
            <person name="Sinclair B."/>
            <person name="Sperling S."/>
            <person name="Stupka E."/>
            <person name="Sugiura K."/>
            <person name="Sultana R."/>
            <person name="Takenaka Y."/>
            <person name="Taki K."/>
            <person name="Tammoja K."/>
            <person name="Tan S.L."/>
            <person name="Tang S."/>
            <person name="Taylor M.S."/>
            <person name="Tegner J."/>
            <person name="Teichmann S.A."/>
            <person name="Ueda H.R."/>
            <person name="van Nimwegen E."/>
            <person name="Verardo R."/>
            <person name="Wei C.L."/>
            <person name="Yagi K."/>
            <person name="Yamanishi H."/>
            <person name="Zabarovsky E."/>
            <person name="Zhu S."/>
            <person name="Zimmer A."/>
            <person name="Hide W."/>
            <person name="Bult C."/>
            <person name="Grimmond S.M."/>
            <person name="Teasdale R.D."/>
            <person name="Liu E.T."/>
            <person name="Brusic V."/>
            <person name="Quackenbush J."/>
            <person name="Wahlestedt C."/>
            <person name="Mattick J.S."/>
            <person name="Hume D.A."/>
            <person name="Kai C."/>
            <person name="Sasaki D."/>
            <person name="Tomaru Y."/>
            <person name="Fukuda S."/>
            <person name="Kanamori-Katayama M."/>
            <person name="Suzuki M."/>
            <person name="Aoki J."/>
            <person name="Arakawa T."/>
            <person name="Iida J."/>
            <person name="Imamura K."/>
            <person name="Itoh M."/>
            <person name="Kato T."/>
            <person name="Kawaji H."/>
            <person name="Kawagashira N."/>
            <person name="Kawashima T."/>
            <person name="Kojima M."/>
            <person name="Kondo S."/>
            <person name="Konno H."/>
            <person name="Nakano K."/>
            <person name="Ninomiya N."/>
            <person name="Nishio T."/>
            <person name="Okada M."/>
            <person name="Plessy C."/>
            <person name="Shibata K."/>
            <person name="Shiraki T."/>
            <person name="Suzuki S."/>
            <person name="Tagami M."/>
            <person name="Waki K."/>
            <person name="Watahiki A."/>
            <person name="Okamura-Oho Y."/>
            <person name="Suzuki H."/>
            <person name="Kawai J."/>
            <person name="Hayashizaki Y."/>
        </authorList>
    </citation>
    <scope>NUCLEOTIDE SEQUENCE [LARGE SCALE MRNA] (ISOFORMS 2 AND 4)</scope>
    <source>
        <strain>C57BL/6J</strain>
        <tissue>Head</tissue>
        <tissue>Stomach</tissue>
        <tissue>Thymus</tissue>
    </source>
</reference>
<reference key="3">
    <citation type="journal article" date="2004" name="Genome Res.">
        <title>The status, quality, and expansion of the NIH full-length cDNA project: the Mammalian Gene Collection (MGC).</title>
        <authorList>
            <consortium name="The MGC Project Team"/>
        </authorList>
    </citation>
    <scope>NUCLEOTIDE SEQUENCE [LARGE SCALE MRNA] (ISOFORM 3)</scope>
    <source>
        <strain>FVB/N</strain>
        <tissue>Mammary tumor</tissue>
    </source>
</reference>
<reference key="4">
    <citation type="journal article" date="2006" name="Mol. Cell. Proteomics">
        <title>Comprehensive identification of phosphorylation sites in postsynaptic density preparations.</title>
        <authorList>
            <person name="Trinidad J.C."/>
            <person name="Specht C.G."/>
            <person name="Thalhammer A."/>
            <person name="Schoepfer R."/>
            <person name="Burlingame A.L."/>
        </authorList>
    </citation>
    <scope>PHOSPHORYLATION [LARGE SCALE ANALYSIS] AT SER-542 AND SER-609</scope>
    <scope>IDENTIFICATION BY MASS SPECTROMETRY [LARGE SCALE ANALYSIS]</scope>
    <source>
        <tissue>Brain</tissue>
    </source>
</reference>
<reference key="5">
    <citation type="journal article" date="2007" name="Proc. Natl. Acad. Sci. U.S.A.">
        <title>Large-scale phosphorylation analysis of mouse liver.</title>
        <authorList>
            <person name="Villen J."/>
            <person name="Beausoleil S.A."/>
            <person name="Gerber S.A."/>
            <person name="Gygi S.P."/>
        </authorList>
    </citation>
    <scope>PHOSPHORYLATION [LARGE SCALE ANALYSIS] AT SER-533; SER-542; SER-601; SER-609; SER-900 AND SER-904</scope>
    <scope>PHOSPHORYLATION [LARGE SCALE ANALYSIS] AT SER-1226 (ISOFORM 2)</scope>
    <scope>PHOSPHORYLATION [LARGE SCALE ANALYSIS] AT SER-990 (ISOFORM 4)</scope>
    <scope>PHOSPHORYLATION [LARGE SCALE ANALYSIS] AT SER-1180 (ISOFORM 6)</scope>
    <scope>IDENTIFICATION BY MASS SPECTROMETRY [LARGE SCALE ANALYSIS]</scope>
    <source>
        <tissue>Liver</tissue>
    </source>
</reference>
<reference key="6">
    <citation type="journal article" date="2010" name="Cell">
        <title>A tissue-specific atlas of mouse protein phosphorylation and expression.</title>
        <authorList>
            <person name="Huttlin E.L."/>
            <person name="Jedrychowski M.P."/>
            <person name="Elias J.E."/>
            <person name="Goswami T."/>
            <person name="Rad R."/>
            <person name="Beausoleil S.A."/>
            <person name="Villen J."/>
            <person name="Haas W."/>
            <person name="Sowa M.E."/>
            <person name="Gygi S.P."/>
        </authorList>
    </citation>
    <scope>PHOSPHORYLATION [LARGE SCALE ANALYSIS] AT SER-533; SER-542; SER-601; SER-609; SER-864; SER-868; SER-900 AND SER-904</scope>
    <scope>PHOSPHORYLATION [LARGE SCALE ANALYSIS] AT SER-1226 (ISOFORM 2)</scope>
    <scope>PHOSPHORYLATION [LARGE SCALE ANALYSIS] AT SER-990 (ISOFORM 4)</scope>
    <scope>PHOSPHORYLATION [LARGE SCALE ANALYSIS] AT SER-1180 (ISOFORM 6)</scope>
    <scope>IDENTIFICATION BY MASS SPECTROMETRY [LARGE SCALE ANALYSIS]</scope>
    <source>
        <tissue>Brain</tissue>
        <tissue>Brown adipose tissue</tissue>
        <tissue>Heart</tissue>
        <tissue>Kidney</tissue>
        <tissue>Liver</tissue>
        <tissue>Lung</tissue>
        <tissue>Pancreas</tissue>
        <tissue>Testis</tissue>
    </source>
</reference>
<reference key="7">
    <citation type="journal article" date="2018" name="Cell Rep.">
        <title>A Dock-and-Lock Mechanism Clusters ADAM10 at Cell-Cell Junctions to Promote alpha-Toxin Cytotoxicity.</title>
        <authorList>
            <person name="Shah J."/>
            <person name="Rouaud F."/>
            <person name="Guerrera D."/>
            <person name="Vasileva E."/>
            <person name="Popov L.M."/>
            <person name="Kelley W.L."/>
            <person name="Rubinstein E."/>
            <person name="Carette J.E."/>
            <person name="Amieva M.R."/>
            <person name="Citi S."/>
        </authorList>
    </citation>
    <scope>FUNCTION</scope>
    <scope>SUBCELLULAR LOCATION</scope>
    <scope>TISSUE SPECIFICITY</scope>
</reference>
<organism>
    <name type="scientific">Mus musculus</name>
    <name type="common">Mouse</name>
    <dbReference type="NCBI Taxonomy" id="10090"/>
    <lineage>
        <taxon>Eukaryota</taxon>
        <taxon>Metazoa</taxon>
        <taxon>Chordata</taxon>
        <taxon>Craniata</taxon>
        <taxon>Vertebrata</taxon>
        <taxon>Euteleostomi</taxon>
        <taxon>Mammalia</taxon>
        <taxon>Eutheria</taxon>
        <taxon>Euarchontoglires</taxon>
        <taxon>Glires</taxon>
        <taxon>Rodentia</taxon>
        <taxon>Myomorpha</taxon>
        <taxon>Muroidea</taxon>
        <taxon>Muridae</taxon>
        <taxon>Murinae</taxon>
        <taxon>Mus</taxon>
        <taxon>Mus</taxon>
    </lineage>
</organism>
<feature type="chain" id="PRO_0000287693" description="Pleckstrin homology domain-containing family A member 7">
    <location>
        <begin position="1"/>
        <end position="1118"/>
    </location>
</feature>
<feature type="domain" description="WW 1" evidence="5">
    <location>
        <begin position="8"/>
        <end position="41"/>
    </location>
</feature>
<feature type="domain" description="WW 2" evidence="5">
    <location>
        <begin position="53"/>
        <end position="86"/>
    </location>
</feature>
<feature type="domain" description="PH" evidence="4">
    <location>
        <begin position="163"/>
        <end position="281"/>
    </location>
</feature>
<feature type="region of interest" description="Disordered" evidence="6">
    <location>
        <begin position="100"/>
        <end position="145"/>
    </location>
</feature>
<feature type="region of interest" description="Disordered" evidence="6">
    <location>
        <begin position="334"/>
        <end position="512"/>
    </location>
</feature>
<feature type="region of interest" description="Disordered" evidence="6">
    <location>
        <begin position="528"/>
        <end position="629"/>
    </location>
</feature>
<feature type="region of interest" description="Interaction with CTNND1" evidence="1">
    <location>
        <begin position="535"/>
        <end position="693"/>
    </location>
</feature>
<feature type="region of interest" description="Disordered" evidence="6">
    <location>
        <begin position="839"/>
        <end position="873"/>
    </location>
</feature>
<feature type="region of interest" description="Disordered" evidence="6">
    <location>
        <begin position="886"/>
        <end position="968"/>
    </location>
</feature>
<feature type="region of interest" description="Disordered" evidence="6">
    <location>
        <begin position="1003"/>
        <end position="1024"/>
    </location>
</feature>
<feature type="coiled-coil region" evidence="3">
    <location>
        <begin position="697"/>
        <end position="798"/>
    </location>
</feature>
<feature type="coiled-coil region" evidence="3">
    <location>
        <begin position="1064"/>
        <end position="1091"/>
    </location>
</feature>
<feature type="compositionally biased region" description="Basic and acidic residues" evidence="6">
    <location>
        <begin position="100"/>
        <end position="113"/>
    </location>
</feature>
<feature type="compositionally biased region" description="Polar residues" evidence="6">
    <location>
        <begin position="114"/>
        <end position="131"/>
    </location>
</feature>
<feature type="compositionally biased region" description="Basic and acidic residues" evidence="6">
    <location>
        <begin position="334"/>
        <end position="355"/>
    </location>
</feature>
<feature type="compositionally biased region" description="Basic and acidic residues" evidence="6">
    <location>
        <begin position="434"/>
        <end position="443"/>
    </location>
</feature>
<feature type="compositionally biased region" description="Polar residues" evidence="6">
    <location>
        <begin position="452"/>
        <end position="481"/>
    </location>
</feature>
<feature type="compositionally biased region" description="Basic and acidic residues" evidence="6">
    <location>
        <begin position="494"/>
        <end position="512"/>
    </location>
</feature>
<feature type="compositionally biased region" description="Pro residues" evidence="6">
    <location>
        <begin position="564"/>
        <end position="579"/>
    </location>
</feature>
<feature type="compositionally biased region" description="Basic and acidic residues" evidence="6">
    <location>
        <begin position="586"/>
        <end position="602"/>
    </location>
</feature>
<feature type="compositionally biased region" description="Pro residues" evidence="6">
    <location>
        <begin position="930"/>
        <end position="939"/>
    </location>
</feature>
<feature type="compositionally biased region" description="Basic and acidic residues" evidence="6">
    <location>
        <begin position="955"/>
        <end position="966"/>
    </location>
</feature>
<feature type="modified residue" description="Phosphoserine" evidence="13 14">
    <location>
        <position position="533"/>
    </location>
</feature>
<feature type="modified residue" description="Phosphoserine" evidence="12 13 14">
    <location>
        <position position="542"/>
    </location>
</feature>
<feature type="modified residue" description="Phosphoserine" evidence="2">
    <location>
        <position position="566"/>
    </location>
</feature>
<feature type="modified residue" description="Phosphoserine" evidence="13 14">
    <location>
        <position position="601"/>
    </location>
</feature>
<feature type="modified residue" description="Phosphoserine" evidence="2">
    <location>
        <position position="605"/>
    </location>
</feature>
<feature type="modified residue" description="Phosphoserine" evidence="12 13 14">
    <location>
        <position position="609"/>
    </location>
</feature>
<feature type="modified residue" description="Phosphoserine" evidence="2">
    <location>
        <position position="857"/>
    </location>
</feature>
<feature type="modified residue" description="Phosphoserine" evidence="14">
    <location>
        <position position="864"/>
    </location>
</feature>
<feature type="modified residue" description="Phosphothreonine" evidence="2">
    <location>
        <position position="867"/>
    </location>
</feature>
<feature type="modified residue" description="Phosphoserine" evidence="14">
    <location>
        <position position="868"/>
    </location>
</feature>
<feature type="modified residue" description="Phosphoserine" evidence="13 14">
    <location>
        <position position="900"/>
    </location>
</feature>
<feature type="modified residue" description="Phosphoserine" evidence="13 14">
    <location>
        <position position="904"/>
    </location>
</feature>
<feature type="modified residue" description="Phosphoserine" evidence="2">
    <location>
        <position position="983"/>
    </location>
</feature>
<feature type="splice variant" id="VSP_025593" description="In isoform 4." evidence="9">
    <location>
        <begin position="1"/>
        <end position="236"/>
    </location>
</feature>
<feature type="splice variant" id="VSP_025595" description="In isoform 3." evidence="8">
    <location>
        <begin position="1"/>
        <end position="105"/>
    </location>
</feature>
<feature type="splice variant" id="VSP_039544" description="In isoform 6." evidence="10">
    <original>MAAAVGRDTLPEHWSYGVCRDGRVFFINDQLRCTTWLHPRTGEPVNSGHMIRSDLPRGWEEGFTEEGASFFID</original>
    <variation>MEPWRCPPRDARPAALGFWGEPLAVCS</variation>
    <location>
        <begin position="1"/>
        <end position="73"/>
    </location>
</feature>
<feature type="splice variant" id="VSP_044626" description="In isoform 5." evidence="11">
    <location>
        <begin position="1"/>
        <end position="62"/>
    </location>
</feature>
<feature type="splice variant" id="VSP_044627" description="In isoform 5." evidence="11">
    <original>FTEEGASFFID</original>
    <variation>MSLRSTWATVC</variation>
    <location>
        <begin position="63"/>
        <end position="73"/>
    </location>
</feature>
<feature type="splice variant" id="VSP_025596" description="In isoform 2, isoform 4 and isoform 6." evidence="9 10">
    <original>SVC</original>
    <variation>SWKREQEFDLQLLERAAQGDRKDKEEGWLKVQATPVMELDLEPQDYDLDISRELSKPEKVSIPERYVELDPEEPPSLEELQARYQKAEKIRNILARSSMCNLQPLGQDRNSLADLDSQLQEQERIINISYALASEASKRSKQVAAQAITDP</variation>
    <location>
        <begin position="1116"/>
        <end position="1118"/>
    </location>
</feature>
<feature type="modified residue" description="Phosphoserine" evidence="13 14">
    <location sequence="Q3UIL6-2">
        <position position="1226"/>
    </location>
</feature>
<feature type="modified residue" description="Phosphoserine" evidence="13 14">
    <location sequence="Q3UIL6-4">
        <position position="990"/>
    </location>
</feature>
<feature type="modified residue" description="Phosphoserine" evidence="13 14">
    <location sequence="Q3UIL6-6">
        <position position="1180"/>
    </location>
</feature>
<proteinExistence type="evidence at protein level"/>
<comment type="function">
    <text evidence="2 7">Required for zonula adherens biogenesis and maintenance. Acts via its interaction with CAMSAP3, which anchors microtubules at their minus-ends to zonula adherens, leading to the recruitment of KIFC3 kinesin to the junctional site (By similarity). Mediates docking of ADAM10 to zonula adherens through a PDZD11-dependent interaction with the ADAM10-binding protein TSPAN33 (PubMed:30463011).</text>
</comment>
<comment type="subunit">
    <text evidence="2 7">Interacts with CAMSAP3 and CTNND1 (By similarity). Interacts (via WW domains) with TSPAN33 (via cytoplasmic domain) and with PDZD11; the interaction with TSPAN33 is dependent on PDZD11 being bound to PLEKHA7 and facilitates the docking of ADAM10 to zonula adherens through interaction of TSPAN33 with ADAM10 (PubMed:30463011).</text>
</comment>
<comment type="subcellular location">
    <subcellularLocation>
        <location evidence="7">Cell junction</location>
        <location evidence="7">Adherens junction</location>
    </subcellularLocation>
    <subcellularLocation>
        <location evidence="2">Cytoplasm</location>
        <location evidence="2">Cytoskeleton</location>
        <location evidence="2">Microtubule organizing center</location>
        <location evidence="2">Centrosome</location>
    </subcellularLocation>
    <text evidence="2">Localizes to zonula adherens, recruited via its interaction with CTNND1.</text>
</comment>
<comment type="alternative products">
    <event type="alternative splicing"/>
    <isoform>
        <id>Q3UIL6-1</id>
        <name>1</name>
        <sequence type="displayed"/>
    </isoform>
    <isoform>
        <id>Q3UIL6-2</id>
        <name>2</name>
        <name>HADP1a</name>
        <sequence type="described" ref="VSP_025596"/>
    </isoform>
    <isoform>
        <id>Q3UIL6-3</id>
        <name>3</name>
        <sequence type="described" ref="VSP_025595"/>
    </isoform>
    <isoform>
        <id>Q3UIL6-4</id>
        <name>4</name>
        <sequence type="described" ref="VSP_025593 VSP_025596"/>
    </isoform>
    <isoform>
        <id>Q3UIL6-5</id>
        <name>5</name>
        <sequence type="described" ref="VSP_044626 VSP_044627"/>
    </isoform>
    <isoform>
        <id>Q3UIL6-6</id>
        <name>6</name>
        <name>HADP1b</name>
        <sequence type="described" ref="VSP_039544 VSP_025596"/>
    </isoform>
</comment>
<comment type="tissue specificity">
    <text evidence="7">Expressed in kidney and lung (at protein level).</text>
</comment>
<comment type="sequence caution" evidence="11">
    <conflict type="erroneous initiation">
        <sequence resource="EMBL-CDS" id="BAE36027"/>
    </conflict>
    <text>Truncated N-terminus.</text>
</comment>
<comment type="sequence caution" evidence="11">
    <conflict type="frameshift">
        <sequence resource="EMBL-CDS" id="BAE36027"/>
    </conflict>
</comment>
<gene>
    <name type="primary">Plekha7</name>
    <name type="synonym">Hadp1</name>
</gene>
<protein>
    <recommendedName>
        <fullName>Pleckstrin homology domain-containing family A member 7</fullName>
        <shortName>PH domain-containing family A member 7</shortName>
    </recommendedName>
    <alternativeName>
        <fullName>Heart adapter protein 1</fullName>
    </alternativeName>
</protein>
<accession>Q3UIL6</accession>
<accession>B6RSP2</accession>
<accession>B6RSP3</accession>
<accession>Q3TUE4</accession>
<accession>Q5XG70</accession>
<accession>Q8BYE3</accession>